<proteinExistence type="inferred from homology"/>
<accession>A0AHV1</accession>
<protein>
    <recommendedName>
        <fullName evidence="1">Cobyric acid synthase</fullName>
    </recommendedName>
</protein>
<gene>
    <name evidence="1" type="primary">cobQ</name>
    <name type="ordered locus">lwe1165</name>
</gene>
<keyword id="KW-0169">Cobalamin biosynthesis</keyword>
<keyword id="KW-0315">Glutamine amidotransferase</keyword>
<name>COBQ_LISW6</name>
<comment type="function">
    <text evidence="1">Catalyzes amidations at positions B, D, E, and G on adenosylcobyrinic A,C-diamide. NH(2) groups are provided by glutamine, and one molecule of ATP is hydrogenolyzed for each amidation.</text>
</comment>
<comment type="pathway">
    <text evidence="1">Cofactor biosynthesis; adenosylcobalamin biosynthesis.</text>
</comment>
<comment type="similarity">
    <text evidence="1">Belongs to the CobB/CobQ family. CobQ subfamily.</text>
</comment>
<sequence>MVEQIMIQGTASDAGKSILVAGLCRLFKNKGKRVVPFKSQNMSLNSFITATGDEMGRAQVFQAEAAGVFPDVRMNPVLLKPTNDRQSQVVFMGSILDNMDAVTYHDFKQTLISKIQAVYQSLADENDIIVLEGAGSPAEINLNDRDIVNMGMAKMVDAPVVLVADIDKGGVFASIYGTIMLLNEEESARIKGVIINKFRGDVALLQPGIDMIEELTKVPVIGVIPYANLKLEEEDSVSLSGKNYVPNSSALLDIAIICLPRISNFTDFHVLEIQPDISLRYIRNLAEFGNPDLVIIPGSKNTLEDMAFLEKSGLKKAIQHYAEKAGKVIGICGGYQMLGKKMLDPNQVESEQIEISGLGLLDTETIFLNQKRTTQITGVTLSGEPVEGYEIHMGQTKRGESTSPFCEIKAVNGNQETHQDGAVSTNKNIIGTYIHGIFDNDIFLGNLFNELLTLKNKTVYPHEIIQLKEHKEQEYDKLAALLEENIQMDQLEKIMKGEKICVSTQKPVIKE</sequence>
<reference key="1">
    <citation type="journal article" date="2006" name="J. Bacteriol.">
        <title>Whole-genome sequence of Listeria welshimeri reveals common steps in genome reduction with Listeria innocua as compared to Listeria monocytogenes.</title>
        <authorList>
            <person name="Hain T."/>
            <person name="Steinweg C."/>
            <person name="Kuenne C.T."/>
            <person name="Billion A."/>
            <person name="Ghai R."/>
            <person name="Chatterjee S.S."/>
            <person name="Domann E."/>
            <person name="Kaerst U."/>
            <person name="Goesmann A."/>
            <person name="Bekel T."/>
            <person name="Bartels D."/>
            <person name="Kaiser O."/>
            <person name="Meyer F."/>
            <person name="Puehler A."/>
            <person name="Weisshaar B."/>
            <person name="Wehland J."/>
            <person name="Liang C."/>
            <person name="Dandekar T."/>
            <person name="Lampidis R."/>
            <person name="Kreft J."/>
            <person name="Goebel W."/>
            <person name="Chakraborty T."/>
        </authorList>
    </citation>
    <scope>NUCLEOTIDE SEQUENCE [LARGE SCALE GENOMIC DNA]</scope>
    <source>
        <strain>ATCC 35897 / DSM 20650 / CCUG 15529 / CIP 8149 / NCTC 11857 / SLCC 5334 / V8</strain>
    </source>
</reference>
<organism>
    <name type="scientific">Listeria welshimeri serovar 6b (strain ATCC 35897 / DSM 20650 / CCUG 15529 / CIP 8149 / NCTC 11857 / SLCC 5334 / V8)</name>
    <dbReference type="NCBI Taxonomy" id="386043"/>
    <lineage>
        <taxon>Bacteria</taxon>
        <taxon>Bacillati</taxon>
        <taxon>Bacillota</taxon>
        <taxon>Bacilli</taxon>
        <taxon>Bacillales</taxon>
        <taxon>Listeriaceae</taxon>
        <taxon>Listeria</taxon>
    </lineage>
</organism>
<evidence type="ECO:0000255" key="1">
    <source>
        <dbReference type="HAMAP-Rule" id="MF_00028"/>
    </source>
</evidence>
<feature type="chain" id="PRO_1000002362" description="Cobyric acid synthase">
    <location>
        <begin position="1"/>
        <end position="511"/>
    </location>
</feature>
<feature type="domain" description="GATase cobBQ-type" evidence="1">
    <location>
        <begin position="251"/>
        <end position="443"/>
    </location>
</feature>
<feature type="active site" description="Nucleophile" evidence="1">
    <location>
        <position position="332"/>
    </location>
</feature>
<feature type="active site" evidence="1">
    <location>
        <position position="435"/>
    </location>
</feature>
<dbReference type="EMBL" id="AM263198">
    <property type="protein sequence ID" value="CAK20583.1"/>
    <property type="molecule type" value="Genomic_DNA"/>
</dbReference>
<dbReference type="RefSeq" id="WP_011701981.1">
    <property type="nucleotide sequence ID" value="NC_008555.1"/>
</dbReference>
<dbReference type="SMR" id="A0AHV1"/>
<dbReference type="STRING" id="386043.lwe1165"/>
<dbReference type="GeneID" id="61189048"/>
<dbReference type="KEGG" id="lwe:lwe1165"/>
<dbReference type="eggNOG" id="COG1492">
    <property type="taxonomic scope" value="Bacteria"/>
</dbReference>
<dbReference type="HOGENOM" id="CLU_019250_2_2_9"/>
<dbReference type="OrthoDB" id="9808302at2"/>
<dbReference type="UniPathway" id="UPA00148"/>
<dbReference type="Proteomes" id="UP000000779">
    <property type="component" value="Chromosome"/>
</dbReference>
<dbReference type="GO" id="GO:0015420">
    <property type="term" value="F:ABC-type vitamin B12 transporter activity"/>
    <property type="evidence" value="ECO:0007669"/>
    <property type="project" value="UniProtKB-UniRule"/>
</dbReference>
<dbReference type="GO" id="GO:0003824">
    <property type="term" value="F:catalytic activity"/>
    <property type="evidence" value="ECO:0007669"/>
    <property type="project" value="InterPro"/>
</dbReference>
<dbReference type="GO" id="GO:0009236">
    <property type="term" value="P:cobalamin biosynthetic process"/>
    <property type="evidence" value="ECO:0007669"/>
    <property type="project" value="UniProtKB-UniRule"/>
</dbReference>
<dbReference type="CDD" id="cd05389">
    <property type="entry name" value="CobQ_N"/>
    <property type="match status" value="1"/>
</dbReference>
<dbReference type="CDD" id="cd01750">
    <property type="entry name" value="GATase1_CobQ"/>
    <property type="match status" value="1"/>
</dbReference>
<dbReference type="Gene3D" id="3.40.50.880">
    <property type="match status" value="1"/>
</dbReference>
<dbReference type="Gene3D" id="3.40.50.300">
    <property type="entry name" value="P-loop containing nucleotide triphosphate hydrolases"/>
    <property type="match status" value="1"/>
</dbReference>
<dbReference type="HAMAP" id="MF_00028">
    <property type="entry name" value="CobQ"/>
    <property type="match status" value="1"/>
</dbReference>
<dbReference type="InterPro" id="IPR029062">
    <property type="entry name" value="Class_I_gatase-like"/>
</dbReference>
<dbReference type="InterPro" id="IPR002586">
    <property type="entry name" value="CobQ/CobB/MinD/ParA_Nub-bd_dom"/>
</dbReference>
<dbReference type="InterPro" id="IPR033949">
    <property type="entry name" value="CobQ_GATase1"/>
</dbReference>
<dbReference type="InterPro" id="IPR047045">
    <property type="entry name" value="CobQ_N"/>
</dbReference>
<dbReference type="InterPro" id="IPR004459">
    <property type="entry name" value="CobQ_synth"/>
</dbReference>
<dbReference type="InterPro" id="IPR011698">
    <property type="entry name" value="GATase_3"/>
</dbReference>
<dbReference type="InterPro" id="IPR027417">
    <property type="entry name" value="P-loop_NTPase"/>
</dbReference>
<dbReference type="NCBIfam" id="TIGR00313">
    <property type="entry name" value="cobQ"/>
    <property type="match status" value="1"/>
</dbReference>
<dbReference type="NCBIfam" id="NF001989">
    <property type="entry name" value="PRK00784.1"/>
    <property type="match status" value="1"/>
</dbReference>
<dbReference type="PANTHER" id="PTHR21343:SF1">
    <property type="entry name" value="COBYRIC ACID SYNTHASE"/>
    <property type="match status" value="1"/>
</dbReference>
<dbReference type="PANTHER" id="PTHR21343">
    <property type="entry name" value="DETHIOBIOTIN SYNTHETASE"/>
    <property type="match status" value="1"/>
</dbReference>
<dbReference type="Pfam" id="PF01656">
    <property type="entry name" value="CbiA"/>
    <property type="match status" value="1"/>
</dbReference>
<dbReference type="Pfam" id="PF07685">
    <property type="entry name" value="GATase_3"/>
    <property type="match status" value="1"/>
</dbReference>
<dbReference type="SUPFAM" id="SSF52317">
    <property type="entry name" value="Class I glutamine amidotransferase-like"/>
    <property type="match status" value="1"/>
</dbReference>
<dbReference type="SUPFAM" id="SSF52540">
    <property type="entry name" value="P-loop containing nucleoside triphosphate hydrolases"/>
    <property type="match status" value="1"/>
</dbReference>
<dbReference type="PROSITE" id="PS51274">
    <property type="entry name" value="GATASE_COBBQ"/>
    <property type="match status" value="1"/>
</dbReference>